<organism>
    <name type="scientific">Methylobacterium sp. (strain 4-46)</name>
    <dbReference type="NCBI Taxonomy" id="426117"/>
    <lineage>
        <taxon>Bacteria</taxon>
        <taxon>Pseudomonadati</taxon>
        <taxon>Pseudomonadota</taxon>
        <taxon>Alphaproteobacteria</taxon>
        <taxon>Hyphomicrobiales</taxon>
        <taxon>Methylobacteriaceae</taxon>
        <taxon>Methylobacterium</taxon>
    </lineage>
</organism>
<proteinExistence type="inferred from homology"/>
<dbReference type="EMBL" id="CP000943">
    <property type="protein sequence ID" value="ACA16582.1"/>
    <property type="molecule type" value="Genomic_DNA"/>
</dbReference>
<dbReference type="SMR" id="B0UBI6"/>
<dbReference type="STRING" id="426117.M446_2120"/>
<dbReference type="KEGG" id="met:M446_2120"/>
<dbReference type="eggNOG" id="COG0830">
    <property type="taxonomic scope" value="Bacteria"/>
</dbReference>
<dbReference type="HOGENOM" id="CLU_049215_2_0_5"/>
<dbReference type="GO" id="GO:0005737">
    <property type="term" value="C:cytoplasm"/>
    <property type="evidence" value="ECO:0007669"/>
    <property type="project" value="UniProtKB-SubCell"/>
</dbReference>
<dbReference type="GO" id="GO:0016151">
    <property type="term" value="F:nickel cation binding"/>
    <property type="evidence" value="ECO:0007669"/>
    <property type="project" value="UniProtKB-UniRule"/>
</dbReference>
<dbReference type="Gene3D" id="1.10.4190.10">
    <property type="entry name" value="Urease accessory protein UreF"/>
    <property type="match status" value="1"/>
</dbReference>
<dbReference type="HAMAP" id="MF_01385">
    <property type="entry name" value="UreF"/>
    <property type="match status" value="1"/>
</dbReference>
<dbReference type="InterPro" id="IPR002639">
    <property type="entry name" value="UreF"/>
</dbReference>
<dbReference type="InterPro" id="IPR038277">
    <property type="entry name" value="UreF_sf"/>
</dbReference>
<dbReference type="PANTHER" id="PTHR33620">
    <property type="entry name" value="UREASE ACCESSORY PROTEIN F"/>
    <property type="match status" value="1"/>
</dbReference>
<dbReference type="PANTHER" id="PTHR33620:SF1">
    <property type="entry name" value="UREASE ACCESSORY PROTEIN F"/>
    <property type="match status" value="1"/>
</dbReference>
<dbReference type="Pfam" id="PF01730">
    <property type="entry name" value="UreF"/>
    <property type="match status" value="1"/>
</dbReference>
<dbReference type="PIRSF" id="PIRSF009467">
    <property type="entry name" value="Ureas_acces_UreF"/>
    <property type="match status" value="1"/>
</dbReference>
<gene>
    <name evidence="1" type="primary">ureF</name>
    <name type="ordered locus">M446_2120</name>
</gene>
<feature type="chain" id="PRO_0000344137" description="Urease accessory protein UreF">
    <location>
        <begin position="1"/>
        <end position="250"/>
    </location>
</feature>
<feature type="region of interest" description="Disordered" evidence="2">
    <location>
        <begin position="1"/>
        <end position="21"/>
    </location>
</feature>
<feature type="compositionally biased region" description="Low complexity" evidence="2">
    <location>
        <begin position="9"/>
        <end position="21"/>
    </location>
</feature>
<keyword id="KW-0143">Chaperone</keyword>
<keyword id="KW-0963">Cytoplasm</keyword>
<keyword id="KW-0996">Nickel insertion</keyword>
<reference key="1">
    <citation type="submission" date="2008-02" db="EMBL/GenBank/DDBJ databases">
        <title>Complete sequence of chromosome of Methylobacterium sp. 4-46.</title>
        <authorList>
            <consortium name="US DOE Joint Genome Institute"/>
            <person name="Copeland A."/>
            <person name="Lucas S."/>
            <person name="Lapidus A."/>
            <person name="Glavina del Rio T."/>
            <person name="Dalin E."/>
            <person name="Tice H."/>
            <person name="Bruce D."/>
            <person name="Goodwin L."/>
            <person name="Pitluck S."/>
            <person name="Chertkov O."/>
            <person name="Brettin T."/>
            <person name="Detter J.C."/>
            <person name="Han C."/>
            <person name="Kuske C.R."/>
            <person name="Schmutz J."/>
            <person name="Larimer F."/>
            <person name="Land M."/>
            <person name="Hauser L."/>
            <person name="Kyrpides N."/>
            <person name="Ivanova N."/>
            <person name="Marx C.J."/>
            <person name="Richardson P."/>
        </authorList>
    </citation>
    <scope>NUCLEOTIDE SEQUENCE [LARGE SCALE GENOMIC DNA]</scope>
    <source>
        <strain>4-46</strain>
    </source>
</reference>
<accession>B0UBI6</accession>
<evidence type="ECO:0000255" key="1">
    <source>
        <dbReference type="HAMAP-Rule" id="MF_01385"/>
    </source>
</evidence>
<evidence type="ECO:0000256" key="2">
    <source>
        <dbReference type="SAM" id="MobiDB-lite"/>
    </source>
</evidence>
<name>UREF_METS4</name>
<sequence length="250" mass="25507">MDEADPGEAEAAQAEAAQDGAAQDGAARDALLLLSWLSPGYPVGAYAYSHGLEWAAEAGDVRDEASLGAWLADVLSHGAARNDAILAAHAHGAGLAGDPRAAEALNDLALALAPSRELHLETSQQGRSFLDATVAAWPAPGLEALATRLPGPVAYPVAVGLAAGAHRIARRSLVTGYLSAFLQNQVSAALRLAPVGQSAGTRVVAALSPLVAALAAEAEGAPLDALGAATLRLDLGSFRHETQYSRIFRS</sequence>
<comment type="function">
    <text evidence="1">Required for maturation of urease via the functional incorporation of the urease nickel metallocenter.</text>
</comment>
<comment type="subunit">
    <text evidence="1">UreD, UreF and UreG form a complex that acts as a GTP-hydrolysis-dependent molecular chaperone, activating the urease apoprotein by helping to assemble the nickel containing metallocenter of UreC. The UreE protein probably delivers the nickel.</text>
</comment>
<comment type="subcellular location">
    <subcellularLocation>
        <location evidence="1">Cytoplasm</location>
    </subcellularLocation>
</comment>
<comment type="similarity">
    <text evidence="1">Belongs to the UreF family.</text>
</comment>
<protein>
    <recommendedName>
        <fullName evidence="1">Urease accessory protein UreF</fullName>
    </recommendedName>
</protein>